<protein>
    <recommendedName>
        <fullName evidence="1">Cytochrome b6-f complex subunit 5</fullName>
    </recommendedName>
    <alternativeName>
        <fullName evidence="1">Cytochrome b6-f complex subunit PetG</fullName>
    </alternativeName>
    <alternativeName>
        <fullName evidence="1">Cytochrome b6-f complex subunit V</fullName>
    </alternativeName>
</protein>
<accession>B7JUD9</accession>
<dbReference type="EMBL" id="CP001287">
    <property type="protein sequence ID" value="ACK64519.1"/>
    <property type="molecule type" value="Genomic_DNA"/>
</dbReference>
<dbReference type="RefSeq" id="WP_012593796.1">
    <property type="nucleotide sequence ID" value="NC_011726.1"/>
</dbReference>
<dbReference type="SMR" id="B7JUD9"/>
<dbReference type="STRING" id="41431.PCC8801_0422"/>
<dbReference type="KEGG" id="cyp:PCC8801_0422"/>
<dbReference type="eggNOG" id="ENOG5033BE9">
    <property type="taxonomic scope" value="Bacteria"/>
</dbReference>
<dbReference type="HOGENOM" id="CLU_216962_0_0_3"/>
<dbReference type="Proteomes" id="UP000008204">
    <property type="component" value="Chromosome"/>
</dbReference>
<dbReference type="GO" id="GO:0009512">
    <property type="term" value="C:cytochrome b6f complex"/>
    <property type="evidence" value="ECO:0007669"/>
    <property type="project" value="InterPro"/>
</dbReference>
<dbReference type="GO" id="GO:0031676">
    <property type="term" value="C:plasma membrane-derived thylakoid membrane"/>
    <property type="evidence" value="ECO:0007669"/>
    <property type="project" value="UniProtKB-SubCell"/>
</dbReference>
<dbReference type="GO" id="GO:0045158">
    <property type="term" value="F:electron transporter, transferring electrons within cytochrome b6/f complex of photosystem II activity"/>
    <property type="evidence" value="ECO:0007669"/>
    <property type="project" value="UniProtKB-UniRule"/>
</dbReference>
<dbReference type="GO" id="GO:0017004">
    <property type="term" value="P:cytochrome complex assembly"/>
    <property type="evidence" value="ECO:0007669"/>
    <property type="project" value="UniProtKB-UniRule"/>
</dbReference>
<dbReference type="GO" id="GO:0015979">
    <property type="term" value="P:photosynthesis"/>
    <property type="evidence" value="ECO:0007669"/>
    <property type="project" value="UniProtKB-KW"/>
</dbReference>
<dbReference type="HAMAP" id="MF_00432">
    <property type="entry name" value="Cytb6_f_PetG"/>
    <property type="match status" value="1"/>
</dbReference>
<dbReference type="InterPro" id="IPR003683">
    <property type="entry name" value="Cyt_6/f_cplx_su5"/>
</dbReference>
<dbReference type="InterPro" id="IPR036099">
    <property type="entry name" value="Cyt_6/f_cplx_su5_sf"/>
</dbReference>
<dbReference type="NCBIfam" id="NF001907">
    <property type="entry name" value="PRK00665.1"/>
    <property type="match status" value="1"/>
</dbReference>
<dbReference type="Pfam" id="PF02529">
    <property type="entry name" value="PetG"/>
    <property type="match status" value="1"/>
</dbReference>
<dbReference type="PIRSF" id="PIRSF000034">
    <property type="entry name" value="Cyt_b6-f_V"/>
    <property type="match status" value="1"/>
</dbReference>
<dbReference type="SUPFAM" id="SSF103446">
    <property type="entry name" value="PetG subunit of the cytochrome b6f complex"/>
    <property type="match status" value="1"/>
</dbReference>
<feature type="chain" id="PRO_1000192784" description="Cytochrome b6-f complex subunit 5">
    <location>
        <begin position="1"/>
        <end position="38"/>
    </location>
</feature>
<feature type="transmembrane region" description="Helical" evidence="1">
    <location>
        <begin position="5"/>
        <end position="25"/>
    </location>
</feature>
<reference key="1">
    <citation type="journal article" date="2011" name="MBio">
        <title>Novel metabolic attributes of the genus Cyanothece, comprising a group of unicellular nitrogen-fixing Cyanobacteria.</title>
        <authorList>
            <person name="Bandyopadhyay A."/>
            <person name="Elvitigala T."/>
            <person name="Welsh E."/>
            <person name="Stockel J."/>
            <person name="Liberton M."/>
            <person name="Min H."/>
            <person name="Sherman L.A."/>
            <person name="Pakrasi H.B."/>
        </authorList>
    </citation>
    <scope>NUCLEOTIDE SEQUENCE [LARGE SCALE GENOMIC DNA]</scope>
    <source>
        <strain>PCC 8801 / RF-1</strain>
    </source>
</reference>
<organism>
    <name type="scientific">Rippkaea orientalis (strain PCC 8801 / RF-1)</name>
    <name type="common">Cyanothece sp. (strain PCC 8801)</name>
    <dbReference type="NCBI Taxonomy" id="41431"/>
    <lineage>
        <taxon>Bacteria</taxon>
        <taxon>Bacillati</taxon>
        <taxon>Cyanobacteriota</taxon>
        <taxon>Cyanophyceae</taxon>
        <taxon>Oscillatoriophycideae</taxon>
        <taxon>Chroococcales</taxon>
        <taxon>Aphanothecaceae</taxon>
        <taxon>Rippkaea</taxon>
        <taxon>Rippkaea orientalis</taxon>
    </lineage>
</organism>
<proteinExistence type="inferred from homology"/>
<comment type="function">
    <text evidence="1">Component of the cytochrome b6-f complex, which mediates electron transfer between photosystem II (PSII) and photosystem I (PSI), cyclic electron flow around PSI, and state transitions. PetG is required for either the stability or assembly of the cytochrome b6-f complex.</text>
</comment>
<comment type="subunit">
    <text evidence="1">The 4 large subunits of the cytochrome b6-f complex are cytochrome b6, subunit IV (17 kDa polypeptide, PetD), cytochrome f and the Rieske protein, while the 4 small subunits are PetG, PetL, PetM and PetN. The complex functions as a dimer.</text>
</comment>
<comment type="subcellular location">
    <subcellularLocation>
        <location evidence="1">Cellular thylakoid membrane</location>
        <topology evidence="1">Single-pass membrane protein</topology>
    </subcellularLocation>
</comment>
<comment type="similarity">
    <text evidence="1">Belongs to the PetG family.</text>
</comment>
<name>PETG_RIPO1</name>
<gene>
    <name evidence="1" type="primary">petG</name>
    <name type="ordered locus">PCC8801_0422</name>
</gene>
<sequence length="38" mass="4155">MIEPLLLGIVLGLIPITLAGLFVAAYLQYKRGNQLNID</sequence>
<evidence type="ECO:0000255" key="1">
    <source>
        <dbReference type="HAMAP-Rule" id="MF_00432"/>
    </source>
</evidence>
<keyword id="KW-0249">Electron transport</keyword>
<keyword id="KW-0472">Membrane</keyword>
<keyword id="KW-0602">Photosynthesis</keyword>
<keyword id="KW-1185">Reference proteome</keyword>
<keyword id="KW-0793">Thylakoid</keyword>
<keyword id="KW-0812">Transmembrane</keyword>
<keyword id="KW-1133">Transmembrane helix</keyword>
<keyword id="KW-0813">Transport</keyword>